<name>COABC_VIBPA</name>
<reference key="1">
    <citation type="journal article" date="2003" name="Lancet">
        <title>Genome sequence of Vibrio parahaemolyticus: a pathogenic mechanism distinct from that of V. cholerae.</title>
        <authorList>
            <person name="Makino K."/>
            <person name="Oshima K."/>
            <person name="Kurokawa K."/>
            <person name="Yokoyama K."/>
            <person name="Uda T."/>
            <person name="Tagomori K."/>
            <person name="Iijima Y."/>
            <person name="Najima M."/>
            <person name="Nakano M."/>
            <person name="Yamashita A."/>
            <person name="Kubota Y."/>
            <person name="Kimura S."/>
            <person name="Yasunaga T."/>
            <person name="Honda T."/>
            <person name="Shinagawa H."/>
            <person name="Hattori M."/>
            <person name="Iida T."/>
        </authorList>
    </citation>
    <scope>NUCLEOTIDE SEQUENCE [LARGE SCALE GENOMIC DNA]</scope>
    <source>
        <strain>RIMD 2210633</strain>
    </source>
</reference>
<keyword id="KW-0210">Decarboxylase</keyword>
<keyword id="KW-0285">Flavoprotein</keyword>
<keyword id="KW-0288">FMN</keyword>
<keyword id="KW-0436">Ligase</keyword>
<keyword id="KW-0456">Lyase</keyword>
<keyword id="KW-0460">Magnesium</keyword>
<keyword id="KW-0479">Metal-binding</keyword>
<keyword id="KW-0511">Multifunctional enzyme</keyword>
<feature type="chain" id="PRO_0000182026" description="Coenzyme A biosynthesis bifunctional protein CoaBC">
    <location>
        <begin position="1"/>
        <end position="399"/>
    </location>
</feature>
<feature type="region of interest" description="Phosphopantothenoylcysteine decarboxylase" evidence="1">
    <location>
        <begin position="1"/>
        <end position="190"/>
    </location>
</feature>
<feature type="region of interest" description="Phosphopantothenate--cysteine ligase" evidence="1">
    <location>
        <begin position="191"/>
        <end position="399"/>
    </location>
</feature>
<feature type="active site" description="Proton donor" evidence="1">
    <location>
        <position position="159"/>
    </location>
</feature>
<feature type="binding site" evidence="1">
    <location>
        <position position="279"/>
    </location>
    <ligand>
        <name>CTP</name>
        <dbReference type="ChEBI" id="CHEBI:37563"/>
    </ligand>
</feature>
<feature type="binding site" evidence="1">
    <location>
        <position position="289"/>
    </location>
    <ligand>
        <name>CTP</name>
        <dbReference type="ChEBI" id="CHEBI:37563"/>
    </ligand>
</feature>
<feature type="binding site" evidence="1">
    <location>
        <begin position="307"/>
        <end position="310"/>
    </location>
    <ligand>
        <name>CTP</name>
        <dbReference type="ChEBI" id="CHEBI:37563"/>
    </ligand>
</feature>
<feature type="binding site" evidence="1">
    <location>
        <position position="326"/>
    </location>
    <ligand>
        <name>CTP</name>
        <dbReference type="ChEBI" id="CHEBI:37563"/>
    </ligand>
</feature>
<feature type="binding site" evidence="1">
    <location>
        <position position="340"/>
    </location>
    <ligand>
        <name>CTP</name>
        <dbReference type="ChEBI" id="CHEBI:37563"/>
    </ligand>
</feature>
<feature type="binding site" evidence="1">
    <location>
        <position position="344"/>
    </location>
    <ligand>
        <name>CTP</name>
        <dbReference type="ChEBI" id="CHEBI:37563"/>
    </ligand>
</feature>
<evidence type="ECO:0000255" key="1">
    <source>
        <dbReference type="HAMAP-Rule" id="MF_02225"/>
    </source>
</evidence>
<sequence length="399" mass="42628">MQTLAGKKILLGISGGIAAYKCAELTRRLIERGAQVQVVMTKAAKEFITPLTMQAVSGRPVSDSLLDPAAEASMGHIELAKWADLVLLAPATADLIARMSAGMGNDLLTTLVLATDSPVAVSPAMNQQMYRNIATQENIATLARRGMNIWGPAAGEQACGDVGPGRMLEPMQLVHLCEQFFQPKVLEGKSILISAGPTREAIDPVRYITNHSSGKMGYALANAAAQLGAKVTLVSGPVNLSTPMGVERINVSSAQEMYEAVMAQAISHDAFISCAAVADYRPEAIASQKLKKTADNDQMTIKMVKNPDIVASVAALTDKRPFTVGFAAETNDVETYARGKLAKKNLNMICANDVSVEGQGFNSNDNAITLFWPDGELALALESKEALSFKILEKMRELM</sequence>
<proteinExistence type="inferred from homology"/>
<dbReference type="EC" id="4.1.1.36" evidence="1"/>
<dbReference type="EC" id="6.3.2.5" evidence="1"/>
<dbReference type="EMBL" id="BA000031">
    <property type="protein sequence ID" value="BAC58444.1"/>
    <property type="molecule type" value="Genomic_DNA"/>
</dbReference>
<dbReference type="RefSeq" id="NP_796560.1">
    <property type="nucleotide sequence ID" value="NC_004603.1"/>
</dbReference>
<dbReference type="RefSeq" id="WP_005478613.1">
    <property type="nucleotide sequence ID" value="NC_004603.1"/>
</dbReference>
<dbReference type="SMR" id="Q87T89"/>
<dbReference type="GeneID" id="1187648"/>
<dbReference type="KEGG" id="vpa:VP0181"/>
<dbReference type="PATRIC" id="fig|223926.6.peg.174"/>
<dbReference type="eggNOG" id="COG0452">
    <property type="taxonomic scope" value="Bacteria"/>
</dbReference>
<dbReference type="HOGENOM" id="CLU_033319_0_1_6"/>
<dbReference type="UniPathway" id="UPA00241">
    <property type="reaction ID" value="UER00353"/>
</dbReference>
<dbReference type="UniPathway" id="UPA00241">
    <property type="reaction ID" value="UER00354"/>
</dbReference>
<dbReference type="Proteomes" id="UP000002493">
    <property type="component" value="Chromosome 1"/>
</dbReference>
<dbReference type="GO" id="GO:0071513">
    <property type="term" value="C:phosphopantothenoylcysteine decarboxylase complex"/>
    <property type="evidence" value="ECO:0007669"/>
    <property type="project" value="TreeGrafter"/>
</dbReference>
<dbReference type="GO" id="GO:0010181">
    <property type="term" value="F:FMN binding"/>
    <property type="evidence" value="ECO:0007669"/>
    <property type="project" value="UniProtKB-UniRule"/>
</dbReference>
<dbReference type="GO" id="GO:0046872">
    <property type="term" value="F:metal ion binding"/>
    <property type="evidence" value="ECO:0007669"/>
    <property type="project" value="UniProtKB-KW"/>
</dbReference>
<dbReference type="GO" id="GO:0004632">
    <property type="term" value="F:phosphopantothenate--cysteine ligase activity"/>
    <property type="evidence" value="ECO:0007669"/>
    <property type="project" value="UniProtKB-UniRule"/>
</dbReference>
<dbReference type="GO" id="GO:0004633">
    <property type="term" value="F:phosphopantothenoylcysteine decarboxylase activity"/>
    <property type="evidence" value="ECO:0007669"/>
    <property type="project" value="UniProtKB-UniRule"/>
</dbReference>
<dbReference type="GO" id="GO:0015937">
    <property type="term" value="P:coenzyme A biosynthetic process"/>
    <property type="evidence" value="ECO:0007669"/>
    <property type="project" value="UniProtKB-UniRule"/>
</dbReference>
<dbReference type="GO" id="GO:0015941">
    <property type="term" value="P:pantothenate catabolic process"/>
    <property type="evidence" value="ECO:0007669"/>
    <property type="project" value="InterPro"/>
</dbReference>
<dbReference type="Gene3D" id="3.40.50.10300">
    <property type="entry name" value="CoaB-like"/>
    <property type="match status" value="1"/>
</dbReference>
<dbReference type="Gene3D" id="3.40.50.1950">
    <property type="entry name" value="Flavin prenyltransferase-like"/>
    <property type="match status" value="1"/>
</dbReference>
<dbReference type="HAMAP" id="MF_02225">
    <property type="entry name" value="CoaBC"/>
    <property type="match status" value="1"/>
</dbReference>
<dbReference type="InterPro" id="IPR035929">
    <property type="entry name" value="CoaB-like_sf"/>
</dbReference>
<dbReference type="InterPro" id="IPR005252">
    <property type="entry name" value="CoaBC"/>
</dbReference>
<dbReference type="InterPro" id="IPR007085">
    <property type="entry name" value="DNA/pantothenate-metab_flavo_C"/>
</dbReference>
<dbReference type="InterPro" id="IPR036551">
    <property type="entry name" value="Flavin_trans-like"/>
</dbReference>
<dbReference type="InterPro" id="IPR003382">
    <property type="entry name" value="Flavoprotein"/>
</dbReference>
<dbReference type="NCBIfam" id="TIGR00521">
    <property type="entry name" value="coaBC_dfp"/>
    <property type="match status" value="1"/>
</dbReference>
<dbReference type="PANTHER" id="PTHR14359">
    <property type="entry name" value="HOMO-OLIGOMERIC FLAVIN CONTAINING CYS DECARBOXYLASE FAMILY"/>
    <property type="match status" value="1"/>
</dbReference>
<dbReference type="PANTHER" id="PTHR14359:SF6">
    <property type="entry name" value="PHOSPHOPANTOTHENOYLCYSTEINE DECARBOXYLASE"/>
    <property type="match status" value="1"/>
</dbReference>
<dbReference type="Pfam" id="PF04127">
    <property type="entry name" value="DFP"/>
    <property type="match status" value="1"/>
</dbReference>
<dbReference type="Pfam" id="PF02441">
    <property type="entry name" value="Flavoprotein"/>
    <property type="match status" value="1"/>
</dbReference>
<dbReference type="SUPFAM" id="SSF102645">
    <property type="entry name" value="CoaB-like"/>
    <property type="match status" value="1"/>
</dbReference>
<dbReference type="SUPFAM" id="SSF52507">
    <property type="entry name" value="Homo-oligomeric flavin-containing Cys decarboxylases, HFCD"/>
    <property type="match status" value="1"/>
</dbReference>
<organism>
    <name type="scientific">Vibrio parahaemolyticus serotype O3:K6 (strain RIMD 2210633)</name>
    <dbReference type="NCBI Taxonomy" id="223926"/>
    <lineage>
        <taxon>Bacteria</taxon>
        <taxon>Pseudomonadati</taxon>
        <taxon>Pseudomonadota</taxon>
        <taxon>Gammaproteobacteria</taxon>
        <taxon>Vibrionales</taxon>
        <taxon>Vibrionaceae</taxon>
        <taxon>Vibrio</taxon>
    </lineage>
</organism>
<gene>
    <name evidence="1" type="primary">coaBC</name>
    <name type="ordered locus">VP0181</name>
</gene>
<comment type="function">
    <text evidence="1">Catalyzes two sequential steps in the biosynthesis of coenzyme A. In the first step cysteine is conjugated to 4'-phosphopantothenate to form 4-phosphopantothenoylcysteine. In the second step the latter compound is decarboxylated to form 4'-phosphopantotheine.</text>
</comment>
<comment type="catalytic activity">
    <reaction evidence="1">
        <text>N-[(R)-4-phosphopantothenoyl]-L-cysteine + H(+) = (R)-4'-phosphopantetheine + CO2</text>
        <dbReference type="Rhea" id="RHEA:16793"/>
        <dbReference type="ChEBI" id="CHEBI:15378"/>
        <dbReference type="ChEBI" id="CHEBI:16526"/>
        <dbReference type="ChEBI" id="CHEBI:59458"/>
        <dbReference type="ChEBI" id="CHEBI:61723"/>
        <dbReference type="EC" id="4.1.1.36"/>
    </reaction>
</comment>
<comment type="catalytic activity">
    <reaction evidence="1">
        <text>(R)-4'-phosphopantothenate + L-cysteine + CTP = N-[(R)-4-phosphopantothenoyl]-L-cysteine + CMP + diphosphate + H(+)</text>
        <dbReference type="Rhea" id="RHEA:19397"/>
        <dbReference type="ChEBI" id="CHEBI:10986"/>
        <dbReference type="ChEBI" id="CHEBI:15378"/>
        <dbReference type="ChEBI" id="CHEBI:33019"/>
        <dbReference type="ChEBI" id="CHEBI:35235"/>
        <dbReference type="ChEBI" id="CHEBI:37563"/>
        <dbReference type="ChEBI" id="CHEBI:59458"/>
        <dbReference type="ChEBI" id="CHEBI:60377"/>
        <dbReference type="EC" id="6.3.2.5"/>
    </reaction>
</comment>
<comment type="cofactor">
    <cofactor evidence="1">
        <name>Mg(2+)</name>
        <dbReference type="ChEBI" id="CHEBI:18420"/>
    </cofactor>
</comment>
<comment type="cofactor">
    <cofactor evidence="1">
        <name>FMN</name>
        <dbReference type="ChEBI" id="CHEBI:58210"/>
    </cofactor>
    <text evidence="1">Binds 1 FMN per subunit.</text>
</comment>
<comment type="pathway">
    <text evidence="1">Cofactor biosynthesis; coenzyme A biosynthesis; CoA from (R)-pantothenate: step 2/5.</text>
</comment>
<comment type="pathway">
    <text evidence="1">Cofactor biosynthesis; coenzyme A biosynthesis; CoA from (R)-pantothenate: step 3/5.</text>
</comment>
<comment type="similarity">
    <text evidence="1">In the N-terminal section; belongs to the HFCD (homo-oligomeric flavin containing Cys decarboxylase) superfamily.</text>
</comment>
<comment type="similarity">
    <text evidence="1">In the C-terminal section; belongs to the PPC synthetase family.</text>
</comment>
<accession>Q87T89</accession>
<protein>
    <recommendedName>
        <fullName evidence="1">Coenzyme A biosynthesis bifunctional protein CoaBC</fullName>
    </recommendedName>
    <alternativeName>
        <fullName evidence="1">DNA/pantothenate metabolism flavoprotein</fullName>
    </alternativeName>
    <alternativeName>
        <fullName evidence="1">Phosphopantothenoylcysteine synthetase/decarboxylase</fullName>
        <shortName evidence="1">PPCS-PPCDC</shortName>
    </alternativeName>
    <domain>
        <recommendedName>
            <fullName evidence="1">Phosphopantothenoylcysteine decarboxylase</fullName>
            <shortName evidence="1">PPC decarboxylase</shortName>
            <shortName evidence="1">PPC-DC</shortName>
            <ecNumber evidence="1">4.1.1.36</ecNumber>
        </recommendedName>
        <alternativeName>
            <fullName evidence="1">CoaC</fullName>
        </alternativeName>
    </domain>
    <domain>
        <recommendedName>
            <fullName evidence="1">Phosphopantothenate--cysteine ligase</fullName>
            <ecNumber evidence="1">6.3.2.5</ecNumber>
        </recommendedName>
        <alternativeName>
            <fullName evidence="1">CoaB</fullName>
        </alternativeName>
        <alternativeName>
            <fullName evidence="1">Phosphopantothenoylcysteine synthetase</fullName>
            <shortName evidence="1">PPC synthetase</shortName>
            <shortName evidence="1">PPC-S</shortName>
        </alternativeName>
    </domain>
</protein>